<dbReference type="EC" id="1.17.7.3" evidence="1"/>
<dbReference type="EMBL" id="CP001176">
    <property type="protein sequence ID" value="ACK62644.1"/>
    <property type="molecule type" value="Genomic_DNA"/>
</dbReference>
<dbReference type="SMR" id="B7HCQ3"/>
<dbReference type="KEGG" id="bcb:BCB4264_A4396"/>
<dbReference type="HOGENOM" id="CLU_042258_0_0_9"/>
<dbReference type="UniPathway" id="UPA00056">
    <property type="reaction ID" value="UER00096"/>
</dbReference>
<dbReference type="Proteomes" id="UP000007096">
    <property type="component" value="Chromosome"/>
</dbReference>
<dbReference type="GO" id="GO:0051539">
    <property type="term" value="F:4 iron, 4 sulfur cluster binding"/>
    <property type="evidence" value="ECO:0007669"/>
    <property type="project" value="UniProtKB-UniRule"/>
</dbReference>
<dbReference type="GO" id="GO:0046429">
    <property type="term" value="F:4-hydroxy-3-methylbut-2-en-1-yl diphosphate synthase activity (ferredoxin)"/>
    <property type="evidence" value="ECO:0007669"/>
    <property type="project" value="UniProtKB-UniRule"/>
</dbReference>
<dbReference type="GO" id="GO:0141197">
    <property type="term" value="F:4-hydroxy-3-methylbut-2-enyl-diphosphate synthase activity (flavodoxin)"/>
    <property type="evidence" value="ECO:0007669"/>
    <property type="project" value="UniProtKB-EC"/>
</dbReference>
<dbReference type="GO" id="GO:0005506">
    <property type="term" value="F:iron ion binding"/>
    <property type="evidence" value="ECO:0007669"/>
    <property type="project" value="InterPro"/>
</dbReference>
<dbReference type="GO" id="GO:0019288">
    <property type="term" value="P:isopentenyl diphosphate biosynthetic process, methylerythritol 4-phosphate pathway"/>
    <property type="evidence" value="ECO:0007669"/>
    <property type="project" value="UniProtKB-UniRule"/>
</dbReference>
<dbReference type="GO" id="GO:0016114">
    <property type="term" value="P:terpenoid biosynthetic process"/>
    <property type="evidence" value="ECO:0007669"/>
    <property type="project" value="InterPro"/>
</dbReference>
<dbReference type="FunFam" id="3.20.20.20:FF:000001">
    <property type="entry name" value="4-hydroxy-3-methylbut-2-en-1-yl diphosphate synthase (flavodoxin)"/>
    <property type="match status" value="1"/>
</dbReference>
<dbReference type="FunFam" id="3.30.413.10:FF:000005">
    <property type="entry name" value="4-hydroxy-3-methylbut-2-en-1-yl diphosphate synthase (flavodoxin)"/>
    <property type="match status" value="1"/>
</dbReference>
<dbReference type="Gene3D" id="3.20.20.20">
    <property type="entry name" value="Dihydropteroate synthase-like"/>
    <property type="match status" value="1"/>
</dbReference>
<dbReference type="Gene3D" id="3.30.413.10">
    <property type="entry name" value="Sulfite Reductase Hemoprotein, domain 1"/>
    <property type="match status" value="1"/>
</dbReference>
<dbReference type="HAMAP" id="MF_00159">
    <property type="entry name" value="IspG"/>
    <property type="match status" value="1"/>
</dbReference>
<dbReference type="InterPro" id="IPR011005">
    <property type="entry name" value="Dihydropteroate_synth-like_sf"/>
</dbReference>
<dbReference type="InterPro" id="IPR016425">
    <property type="entry name" value="IspG_bac"/>
</dbReference>
<dbReference type="InterPro" id="IPR004588">
    <property type="entry name" value="IspG_bac-typ"/>
</dbReference>
<dbReference type="InterPro" id="IPR045854">
    <property type="entry name" value="NO2/SO3_Rdtase_4Fe4S_sf"/>
</dbReference>
<dbReference type="NCBIfam" id="TIGR00612">
    <property type="entry name" value="ispG_gcpE"/>
    <property type="match status" value="1"/>
</dbReference>
<dbReference type="NCBIfam" id="NF001540">
    <property type="entry name" value="PRK00366.1"/>
    <property type="match status" value="1"/>
</dbReference>
<dbReference type="PANTHER" id="PTHR30454">
    <property type="entry name" value="4-HYDROXY-3-METHYLBUT-2-EN-1-YL DIPHOSPHATE SYNTHASE"/>
    <property type="match status" value="1"/>
</dbReference>
<dbReference type="PANTHER" id="PTHR30454:SF0">
    <property type="entry name" value="4-HYDROXY-3-METHYLBUT-2-EN-1-YL DIPHOSPHATE SYNTHASE (FERREDOXIN), CHLOROPLASTIC"/>
    <property type="match status" value="1"/>
</dbReference>
<dbReference type="Pfam" id="PF04551">
    <property type="entry name" value="GcpE"/>
    <property type="match status" value="1"/>
</dbReference>
<dbReference type="PIRSF" id="PIRSF004640">
    <property type="entry name" value="IspG"/>
    <property type="match status" value="1"/>
</dbReference>
<dbReference type="SUPFAM" id="SSF51717">
    <property type="entry name" value="Dihydropteroate synthetase-like"/>
    <property type="match status" value="1"/>
</dbReference>
<dbReference type="SUPFAM" id="SSF56014">
    <property type="entry name" value="Nitrite and sulphite reductase 4Fe-4S domain-like"/>
    <property type="match status" value="1"/>
</dbReference>
<comment type="function">
    <text evidence="1">Converts 2C-methyl-D-erythritol 2,4-cyclodiphosphate (ME-2,4cPP) into 1-hydroxy-2-methyl-2-(E)-butenyl 4-diphosphate.</text>
</comment>
<comment type="catalytic activity">
    <reaction evidence="1">
        <text>(2E)-4-hydroxy-3-methylbut-2-enyl diphosphate + oxidized [flavodoxin] + H2O + 2 H(+) = 2-C-methyl-D-erythritol 2,4-cyclic diphosphate + reduced [flavodoxin]</text>
        <dbReference type="Rhea" id="RHEA:43604"/>
        <dbReference type="Rhea" id="RHEA-COMP:10622"/>
        <dbReference type="Rhea" id="RHEA-COMP:10623"/>
        <dbReference type="ChEBI" id="CHEBI:15377"/>
        <dbReference type="ChEBI" id="CHEBI:15378"/>
        <dbReference type="ChEBI" id="CHEBI:57618"/>
        <dbReference type="ChEBI" id="CHEBI:58210"/>
        <dbReference type="ChEBI" id="CHEBI:58483"/>
        <dbReference type="ChEBI" id="CHEBI:128753"/>
        <dbReference type="EC" id="1.17.7.3"/>
    </reaction>
</comment>
<comment type="cofactor">
    <cofactor evidence="1">
        <name>[4Fe-4S] cluster</name>
        <dbReference type="ChEBI" id="CHEBI:49883"/>
    </cofactor>
    <text evidence="1">Binds 1 [4Fe-4S] cluster.</text>
</comment>
<comment type="pathway">
    <text evidence="1">Isoprenoid biosynthesis; isopentenyl diphosphate biosynthesis via DXP pathway; isopentenyl diphosphate from 1-deoxy-D-xylulose 5-phosphate: step 5/6.</text>
</comment>
<comment type="similarity">
    <text evidence="1">Belongs to the IspG family.</text>
</comment>
<sequence length="370" mass="40016">MNEMTHRTKTRPVKVGNLTIGGNNELIIQSMTTTKTHDVEATVAEIKRLEEAGCQVVRVAVPDERAADAIADIKKQINIPLVADIHFDYRLALKAIEGGIDKVRINPGNIGRRHKVEAVVNAAKERGIPIRIGVNAGSLERHILEKYGYPTADGMVESALHHIKILEDLDFHDIIVSMKASDVNLAIEAYEKAARAFDYPLHLGITESGTLFAGTVKSAAGLGAILNKGIGNTLRISLSADPVEEVKVARELLKSFGLASNAATLISCPTCGRIEIDLISIANEVEEYISTLQVPIKVAVLGCAVNGPGEAREADIGIAGARGEGLLFRKGQVVRKVPEETMVEELKKEIDVIAAEMAAEREKEKETQEQ</sequence>
<keyword id="KW-0004">4Fe-4S</keyword>
<keyword id="KW-0408">Iron</keyword>
<keyword id="KW-0411">Iron-sulfur</keyword>
<keyword id="KW-0414">Isoprene biosynthesis</keyword>
<keyword id="KW-0479">Metal-binding</keyword>
<keyword id="KW-0560">Oxidoreductase</keyword>
<organism>
    <name type="scientific">Bacillus cereus (strain B4264)</name>
    <dbReference type="NCBI Taxonomy" id="405532"/>
    <lineage>
        <taxon>Bacteria</taxon>
        <taxon>Bacillati</taxon>
        <taxon>Bacillota</taxon>
        <taxon>Bacilli</taxon>
        <taxon>Bacillales</taxon>
        <taxon>Bacillaceae</taxon>
        <taxon>Bacillus</taxon>
        <taxon>Bacillus cereus group</taxon>
    </lineage>
</organism>
<protein>
    <recommendedName>
        <fullName evidence="1">4-hydroxy-3-methylbut-2-en-1-yl diphosphate synthase (flavodoxin)</fullName>
        <ecNumber evidence="1">1.17.7.3</ecNumber>
    </recommendedName>
    <alternativeName>
        <fullName evidence="1">1-hydroxy-2-methyl-2-(E)-butenyl 4-diphosphate synthase</fullName>
    </alternativeName>
</protein>
<name>ISPG_BACC4</name>
<reference key="1">
    <citation type="submission" date="2008-10" db="EMBL/GenBank/DDBJ databases">
        <title>Genome sequence of Bacillus cereus B4264.</title>
        <authorList>
            <person name="Dodson R.J."/>
            <person name="Durkin A.S."/>
            <person name="Rosovitz M.J."/>
            <person name="Rasko D.A."/>
            <person name="Hoffmaster A."/>
            <person name="Ravel J."/>
            <person name="Sutton G."/>
        </authorList>
    </citation>
    <scope>NUCLEOTIDE SEQUENCE [LARGE SCALE GENOMIC DNA]</scope>
    <source>
        <strain>B4264</strain>
    </source>
</reference>
<proteinExistence type="inferred from homology"/>
<accession>B7HCQ3</accession>
<evidence type="ECO:0000255" key="1">
    <source>
        <dbReference type="HAMAP-Rule" id="MF_00159"/>
    </source>
</evidence>
<feature type="chain" id="PRO_1000123435" description="4-hydroxy-3-methylbut-2-en-1-yl diphosphate synthase (flavodoxin)">
    <location>
        <begin position="1"/>
        <end position="370"/>
    </location>
</feature>
<feature type="binding site" evidence="1">
    <location>
        <position position="268"/>
    </location>
    <ligand>
        <name>[4Fe-4S] cluster</name>
        <dbReference type="ChEBI" id="CHEBI:49883"/>
    </ligand>
</feature>
<feature type="binding site" evidence="1">
    <location>
        <position position="271"/>
    </location>
    <ligand>
        <name>[4Fe-4S] cluster</name>
        <dbReference type="ChEBI" id="CHEBI:49883"/>
    </ligand>
</feature>
<feature type="binding site" evidence="1">
    <location>
        <position position="303"/>
    </location>
    <ligand>
        <name>[4Fe-4S] cluster</name>
        <dbReference type="ChEBI" id="CHEBI:49883"/>
    </ligand>
</feature>
<feature type="binding site" evidence="1">
    <location>
        <position position="310"/>
    </location>
    <ligand>
        <name>[4Fe-4S] cluster</name>
        <dbReference type="ChEBI" id="CHEBI:49883"/>
    </ligand>
</feature>
<gene>
    <name evidence="1" type="primary">ispG</name>
    <name type="ordered locus">BCB4264_A4396</name>
</gene>